<protein>
    <recommendedName>
        <fullName evidence="1">Potassium-transporting ATPase KdpC subunit</fullName>
    </recommendedName>
    <alternativeName>
        <fullName evidence="1">ATP phosphohydrolase [potassium-transporting] C chain</fullName>
    </alternativeName>
    <alternativeName>
        <fullName evidence="1">Potassium-binding and translocating subunit C</fullName>
    </alternativeName>
    <alternativeName>
        <fullName evidence="1">Potassium-translocating ATPase C chain</fullName>
    </alternativeName>
</protein>
<proteinExistence type="inferred from homology"/>
<dbReference type="EMBL" id="CP000730">
    <property type="protein sequence ID" value="ABX30067.1"/>
    <property type="molecule type" value="Genomic_DNA"/>
</dbReference>
<dbReference type="RefSeq" id="WP_001092411.1">
    <property type="nucleotide sequence ID" value="NC_010079.1"/>
</dbReference>
<dbReference type="SMR" id="A8Z4X8"/>
<dbReference type="KEGG" id="sax:USA300HOU_2070"/>
<dbReference type="HOGENOM" id="CLU_077094_2_0_9"/>
<dbReference type="GO" id="GO:0005886">
    <property type="term" value="C:plasma membrane"/>
    <property type="evidence" value="ECO:0007669"/>
    <property type="project" value="UniProtKB-SubCell"/>
</dbReference>
<dbReference type="GO" id="GO:0005524">
    <property type="term" value="F:ATP binding"/>
    <property type="evidence" value="ECO:0007669"/>
    <property type="project" value="UniProtKB-UniRule"/>
</dbReference>
<dbReference type="GO" id="GO:0008556">
    <property type="term" value="F:P-type potassium transmembrane transporter activity"/>
    <property type="evidence" value="ECO:0007669"/>
    <property type="project" value="InterPro"/>
</dbReference>
<dbReference type="HAMAP" id="MF_00276">
    <property type="entry name" value="KdpC"/>
    <property type="match status" value="1"/>
</dbReference>
<dbReference type="InterPro" id="IPR003820">
    <property type="entry name" value="KdpC"/>
</dbReference>
<dbReference type="NCBIfam" id="TIGR00681">
    <property type="entry name" value="kdpC"/>
    <property type="match status" value="1"/>
</dbReference>
<dbReference type="NCBIfam" id="NF010602">
    <property type="entry name" value="PRK13998.1"/>
    <property type="match status" value="1"/>
</dbReference>
<dbReference type="PANTHER" id="PTHR30042">
    <property type="entry name" value="POTASSIUM-TRANSPORTING ATPASE C CHAIN"/>
    <property type="match status" value="1"/>
</dbReference>
<dbReference type="PANTHER" id="PTHR30042:SF2">
    <property type="entry name" value="POTASSIUM-TRANSPORTING ATPASE KDPC SUBUNIT"/>
    <property type="match status" value="1"/>
</dbReference>
<dbReference type="Pfam" id="PF02669">
    <property type="entry name" value="KdpC"/>
    <property type="match status" value="1"/>
</dbReference>
<dbReference type="PIRSF" id="PIRSF001296">
    <property type="entry name" value="K_ATPase_KdpC"/>
    <property type="match status" value="1"/>
</dbReference>
<name>KDPC_STAAT</name>
<gene>
    <name evidence="1" type="primary">kdpC</name>
    <name type="ordered locus">USA300HOU_2070</name>
</gene>
<sequence>MNTIRNSICLTIITMVLCGFLFPLAITLIGQIFFYQQANGSLITYDNRIVGSKLIGQHWTETRYFHGRPSAVDYNMNPEKLYKNGVSSGGSNESNGNTELIARMKHHVKFGNSNVTIDAATSSGSGLDPHITVENALKQAPRIADARHVSTSRVADLIQHRKQRGVLTNDYVNVLELNIALDKMKD</sequence>
<reference key="1">
    <citation type="journal article" date="2007" name="BMC Microbiol.">
        <title>Subtle genetic changes enhance virulence of methicillin resistant and sensitive Staphylococcus aureus.</title>
        <authorList>
            <person name="Highlander S.K."/>
            <person name="Hulten K.G."/>
            <person name="Qin X."/>
            <person name="Jiang H."/>
            <person name="Yerrapragada S."/>
            <person name="Mason E.O. Jr."/>
            <person name="Shang Y."/>
            <person name="Williams T.M."/>
            <person name="Fortunov R.M."/>
            <person name="Liu Y."/>
            <person name="Igboeli O."/>
            <person name="Petrosino J."/>
            <person name="Tirumalai M."/>
            <person name="Uzman A."/>
            <person name="Fox G.E."/>
            <person name="Cardenas A.M."/>
            <person name="Muzny D.M."/>
            <person name="Hemphill L."/>
            <person name="Ding Y."/>
            <person name="Dugan S."/>
            <person name="Blyth P.R."/>
            <person name="Buhay C.J."/>
            <person name="Dinh H.H."/>
            <person name="Hawes A.C."/>
            <person name="Holder M."/>
            <person name="Kovar C.L."/>
            <person name="Lee S.L."/>
            <person name="Liu W."/>
            <person name="Nazareth L.V."/>
            <person name="Wang Q."/>
            <person name="Zhou J."/>
            <person name="Kaplan S.L."/>
            <person name="Weinstock G.M."/>
        </authorList>
    </citation>
    <scope>NUCLEOTIDE SEQUENCE [LARGE SCALE GENOMIC DNA]</scope>
    <source>
        <strain>USA300 / TCH1516</strain>
    </source>
</reference>
<evidence type="ECO:0000255" key="1">
    <source>
        <dbReference type="HAMAP-Rule" id="MF_00276"/>
    </source>
</evidence>
<comment type="function">
    <text evidence="1">Part of the high-affinity ATP-driven potassium transport (or Kdp) system, which catalyzes the hydrolysis of ATP coupled with the electrogenic transport of potassium into the cytoplasm. This subunit acts as a catalytic chaperone that increases the ATP-binding affinity of the ATP-hydrolyzing subunit KdpB by the formation of a transient KdpB/KdpC/ATP ternary complex.</text>
</comment>
<comment type="subunit">
    <text evidence="1">The system is composed of three essential subunits: KdpA, KdpB and KdpC.</text>
</comment>
<comment type="subcellular location">
    <subcellularLocation>
        <location evidence="1">Cell membrane</location>
        <topology evidence="1">Single-pass membrane protein</topology>
    </subcellularLocation>
</comment>
<comment type="similarity">
    <text evidence="1">Belongs to the KdpC family.</text>
</comment>
<organism>
    <name type="scientific">Staphylococcus aureus (strain USA300 / TCH1516)</name>
    <dbReference type="NCBI Taxonomy" id="451516"/>
    <lineage>
        <taxon>Bacteria</taxon>
        <taxon>Bacillati</taxon>
        <taxon>Bacillota</taxon>
        <taxon>Bacilli</taxon>
        <taxon>Bacillales</taxon>
        <taxon>Staphylococcaceae</taxon>
        <taxon>Staphylococcus</taxon>
    </lineage>
</organism>
<keyword id="KW-0067">ATP-binding</keyword>
<keyword id="KW-1003">Cell membrane</keyword>
<keyword id="KW-0406">Ion transport</keyword>
<keyword id="KW-0472">Membrane</keyword>
<keyword id="KW-0547">Nucleotide-binding</keyword>
<keyword id="KW-0630">Potassium</keyword>
<keyword id="KW-0633">Potassium transport</keyword>
<keyword id="KW-0812">Transmembrane</keyword>
<keyword id="KW-1133">Transmembrane helix</keyword>
<keyword id="KW-0813">Transport</keyword>
<accession>A8Z4X8</accession>
<feature type="chain" id="PRO_1000078803" description="Potassium-transporting ATPase KdpC subunit">
    <location>
        <begin position="1"/>
        <end position="186"/>
    </location>
</feature>
<feature type="transmembrane region" description="Helical" evidence="1">
    <location>
        <begin position="10"/>
        <end position="30"/>
    </location>
</feature>